<keyword id="KW-0460">Magnesium</keyword>
<keyword id="KW-0547">Nucleotide-binding</keyword>
<keyword id="KW-0548">Nucleotidyltransferase</keyword>
<keyword id="KW-0694">RNA-binding</keyword>
<keyword id="KW-0696">RNA-directed RNA polymerase</keyword>
<keyword id="KW-0808">Transferase</keyword>
<keyword id="KW-0693">Viral RNA replication</keyword>
<keyword id="KW-0946">Virion</keyword>
<organismHost>
    <name type="scientific">Bos taurus</name>
    <name type="common">Bovine</name>
    <dbReference type="NCBI Taxonomy" id="9913"/>
</organismHost>
<accession>P17468</accession>
<feature type="chain" id="PRO_0000149525" description="RNA-directed RNA polymerase">
    <location>
        <begin position="1"/>
        <end position="1088"/>
    </location>
</feature>
<feature type="domain" description="RdRp catalytic" evidence="2">
    <location>
        <begin position="501"/>
        <end position="687"/>
    </location>
</feature>
<sequence>MGKYNLILSEYLSFIYNSQSAVQIPIYYSSNSELENRCIEFHSKCLENSKNGLSLKKLFVEYSDVMENATLLSILSYSYDKYNAVERKLVKYAKGKPLEADLTVNELDYENNKITSELFPTAEEYTDSLMDPAILTSLSSNLNAVMFWLEKHENDVAEKLKIYKRRLDLFTIVASTVNKYGVPRHNAKYRYEYEVMKDKPYYLVTWANSSIEMLMSVFSHEDYLIARELIVLSYSNRSTLAKLVSSPMSILVALVDINGTFITNEELELEFSNKYVRAIVPDQTFDELKQMLDNMRKAGLTDIPKMIQDWLVDCSIEKFPLMAKIYSWSFHVGFRKQKMLDAALDQLKTEYTEDVDDEMYREYTMLIRDEVVKMLEEPVKHDDHLLQDSELAGLLSMSSASNGESRQLKFGRKTIFSTKKNMHVMDDMANGRYTPGIIPPVNVDKPIPLGRRDVPGRRTRIIFILPYEYFIAQHAVVEKMLIYAKHTREYAEFYSQSNQLLSYGDVTRFLSNNSMVLYTDVSQWDSSQHNTQPFRKGIIMGLDMLANMTNDARVIQTLNLYKQTQINLMDSYVQIPDGNVIKKIQYGAVASGEKQTKAANSIANLALIKTVLSRISNKYSFATKIIRVDGDDNYAVLQFNTEVTEQMVQDVSNDVRETYARMNAKVKALVSTVGIEIAKRYIAGGKIFFRAGINLLNNEKRGQSTQWDQAAVLYSNYIVNRLRGFETDREFILTKIMQMTSVAITGSLRLFPSERVLTTNSTFKVFDSEDFIIEYGTTDDEVYIQRAFMSLSSQKSGIADEIAASSTFKNYVSRLSGQLLFSKNNIVSRGIALTEKAKLNSYAPISLEKRRAQISALLTMLQKPVTFKSSKITINDILRDIKPFFTVNEAHLPIQYQKFMPTLPDNVQYIIQCIGSRTYQIEDDGSKSAISRLISKYSVYKPSIEELYKVISLHENEIQLYLISLGIPKIDADTYVGSKIYSQDKYRILESYVCNLLSINYGCYQLFDFNSPDLEKLIRIPFKGKIPAVTFILHLYAKLEVINHAIKNGSWISLFCNYPKSEMIKLWKKMWNITSLRSPYTNANFFQD</sequence>
<organism>
    <name type="scientific">Rotavirus A (strain RVA/Cow/France/RF/1975/G6P6[1])</name>
    <name type="common">RV-A</name>
    <dbReference type="NCBI Taxonomy" id="10933"/>
    <lineage>
        <taxon>Viruses</taxon>
        <taxon>Riboviria</taxon>
        <taxon>Orthornavirae</taxon>
        <taxon>Duplornaviricota</taxon>
        <taxon>Resentoviricetes</taxon>
        <taxon>Reovirales</taxon>
        <taxon>Sedoreoviridae</taxon>
        <taxon>Rotavirus</taxon>
        <taxon>Rotavirus A</taxon>
    </lineage>
</organism>
<reference key="1">
    <citation type="journal article" date="1989" name="Virology">
        <title>Nucleotide sequence of bovine rotavirus gene 1 and expression of the gene product in baculovirus.</title>
        <authorList>
            <person name="Cohen J."/>
            <person name="Charpilienne A."/>
            <person name="Chilmonczyk S."/>
            <person name="Estes M.K."/>
        </authorList>
    </citation>
    <scope>NUCLEOTIDE SEQUENCE [GENOMIC RNA]</scope>
</reference>
<reference key="2">
    <citation type="journal article" date="1998" name="J. Virol.">
        <title>The N terminus of rotavirus VP2 is necessary for encapsidation of VP1 and VP3.</title>
        <authorList>
            <person name="Zeng C.Q.-Y."/>
            <person name="Estes M.K."/>
            <person name="Charpilienne A."/>
            <person name="Cohen J."/>
        </authorList>
    </citation>
    <scope>INTERACTION WITH VP2 AND VP3</scope>
</reference>
<dbReference type="EC" id="2.7.7.48"/>
<dbReference type="EMBL" id="J04346">
    <property type="protein sequence ID" value="AAA47319.1"/>
    <property type="molecule type" value="Genomic_RNA"/>
</dbReference>
<dbReference type="SMR" id="P17468"/>
<dbReference type="Proteomes" id="UP000007179">
    <property type="component" value="Genome"/>
</dbReference>
<dbReference type="GO" id="GO:0044423">
    <property type="term" value="C:virion component"/>
    <property type="evidence" value="ECO:0007669"/>
    <property type="project" value="UniProtKB-KW"/>
</dbReference>
<dbReference type="GO" id="GO:0000166">
    <property type="term" value="F:nucleotide binding"/>
    <property type="evidence" value="ECO:0007669"/>
    <property type="project" value="UniProtKB-KW"/>
</dbReference>
<dbReference type="GO" id="GO:0003723">
    <property type="term" value="F:RNA binding"/>
    <property type="evidence" value="ECO:0007669"/>
    <property type="project" value="UniProtKB-KW"/>
</dbReference>
<dbReference type="GO" id="GO:0003968">
    <property type="term" value="F:RNA-directed RNA polymerase activity"/>
    <property type="evidence" value="ECO:0007669"/>
    <property type="project" value="UniProtKB-KW"/>
</dbReference>
<dbReference type="GO" id="GO:0006351">
    <property type="term" value="P:DNA-templated transcription"/>
    <property type="evidence" value="ECO:0007669"/>
    <property type="project" value="InterPro"/>
</dbReference>
<dbReference type="GO" id="GO:0019079">
    <property type="term" value="P:viral genome replication"/>
    <property type="evidence" value="ECO:0007669"/>
    <property type="project" value="InterPro"/>
</dbReference>
<dbReference type="Gene3D" id="1.10.357.80">
    <property type="match status" value="2"/>
</dbReference>
<dbReference type="Gene3D" id="1.20.120.1390">
    <property type="match status" value="1"/>
</dbReference>
<dbReference type="Gene3D" id="3.30.230.140">
    <property type="match status" value="2"/>
</dbReference>
<dbReference type="Gene3D" id="3.30.70.2480">
    <property type="match status" value="1"/>
</dbReference>
<dbReference type="Gene3D" id="1.10.10.1990">
    <property type="entry name" value="Viral RNA-directed RNA polymerase, 4-helical domain"/>
    <property type="match status" value="1"/>
</dbReference>
<dbReference type="InterPro" id="IPR043502">
    <property type="entry name" value="DNA/RNA_pol_sf"/>
</dbReference>
<dbReference type="InterPro" id="IPR042032">
    <property type="entry name" value="RNA-dir_pol_4-hel_dom"/>
</dbReference>
<dbReference type="InterPro" id="IPR001795">
    <property type="entry name" value="RNA-dir_pol_luteovirus"/>
</dbReference>
<dbReference type="InterPro" id="IPR007097">
    <property type="entry name" value="RNA-dir_pol_reovirus"/>
</dbReference>
<dbReference type="InterPro" id="IPR022071">
    <property type="entry name" value="Rotavirus_VP1_C"/>
</dbReference>
<dbReference type="Pfam" id="PF02123">
    <property type="entry name" value="RdRP_4"/>
    <property type="match status" value="1"/>
</dbReference>
<dbReference type="Pfam" id="PF12289">
    <property type="entry name" value="Rotavirus_VP1"/>
    <property type="match status" value="1"/>
</dbReference>
<dbReference type="SUPFAM" id="SSF56672">
    <property type="entry name" value="DNA/RNA polymerases"/>
    <property type="match status" value="1"/>
</dbReference>
<dbReference type="PROSITE" id="PS50523">
    <property type="entry name" value="RDRP_DSRNA_REO"/>
    <property type="match status" value="1"/>
</dbReference>
<comment type="function">
    <text evidence="2">RNA-directed RNA polymerase that is involved in both transcription and genome replication. Together with VP3 capping enzyme, forms an enzyme complex positioned near the channels situated at each of the five-fold vertices of the core. Following infection, the outermost layer of the virus is lost, leaving a double-layered particle (DLP) made up of the core and VP6 shell. VP1 then catalyzes the transcription of fully conservative plus-strand genomic RNAs that are extruded through the DLP's channels into the cytoplasm where they function as mRNAs for translation of viral proteins. One copy of each of the viral (+)RNAs is also recruited during core assembly, together with newly synthesized polymerase complexes and VP2. The polymerase of these novo-formed particles catalyzes the synthesis of complementary minus-strands leading to dsRNA formation. To do so, the polymerase specifically recognizes and binds 4 bases 5'-UGUG-3' in the conserved 3'-sequence of plus-strand RNA templates. VP2 presumably activates the autoinhibited VP1-RNA complex to coordinate packaging and genome replication. Once dsRNA synthesis is complete, the polymerase switches to the transcriptional mode, thus providing secondary transcription (By similarity).</text>
</comment>
<comment type="catalytic activity">
    <reaction evidence="2">
        <text>RNA(n) + a ribonucleoside 5'-triphosphate = RNA(n+1) + diphosphate</text>
        <dbReference type="Rhea" id="RHEA:21248"/>
        <dbReference type="Rhea" id="RHEA-COMP:14527"/>
        <dbReference type="Rhea" id="RHEA-COMP:17342"/>
        <dbReference type="ChEBI" id="CHEBI:33019"/>
        <dbReference type="ChEBI" id="CHEBI:61557"/>
        <dbReference type="ChEBI" id="CHEBI:140395"/>
        <dbReference type="EC" id="2.7.7.48"/>
    </reaction>
</comment>
<comment type="cofactor">
    <cofactor evidence="3">
        <name>Mg(2+)</name>
        <dbReference type="ChEBI" id="CHEBI:18420"/>
    </cofactor>
</comment>
<comment type="subunit">
    <text evidence="1 3">Interacts with VP3 (Potential). Interacts with VP2; this interaction activates VP1. Interacts with NSP5; this interaction is probably necessary for the formation of functional virus factories. Interacts with NSP2; this interaction is weak (By similarity).</text>
</comment>
<comment type="subcellular location">
    <subcellularLocation>
        <location evidence="3">Virion</location>
    </subcellularLocation>
    <text evidence="1">Attached inside the inner capsid as a minor component. Also found in spherical cytoplasmic structures, called virus factories, that appear early after infection and are the site of viral replication and packaging (By similarity).</text>
</comment>
<comment type="similarity">
    <text evidence="3">Belongs to the reoviridae RNA-directed RNA polymerase family.</text>
</comment>
<protein>
    <recommendedName>
        <fullName>RNA-directed RNA polymerase</fullName>
        <ecNumber>2.7.7.48</ecNumber>
    </recommendedName>
    <alternativeName>
        <fullName>Protein VP1</fullName>
    </alternativeName>
</protein>
<proteinExistence type="evidence at protein level"/>
<evidence type="ECO:0000250" key="1"/>
<evidence type="ECO:0000255" key="2">
    <source>
        <dbReference type="PROSITE-ProRule" id="PRU00539"/>
    </source>
</evidence>
<evidence type="ECO:0000305" key="3"/>
<name>RDRP_ROTRF</name>